<dbReference type="EC" id="4.1.1.85" evidence="1"/>
<dbReference type="EMBL" id="CU928162">
    <property type="protein sequence ID" value="CAR11086.2"/>
    <property type="molecule type" value="Genomic_DNA"/>
</dbReference>
<dbReference type="RefSeq" id="WP_000056749.1">
    <property type="nucleotide sequence ID" value="NC_011745.1"/>
</dbReference>
<dbReference type="SMR" id="B7MT10"/>
<dbReference type="KEGG" id="ecq:ECED1_4983"/>
<dbReference type="HOGENOM" id="CLU_081825_0_0_6"/>
<dbReference type="UniPathway" id="UPA00263">
    <property type="reaction ID" value="UER00378"/>
</dbReference>
<dbReference type="Proteomes" id="UP000000748">
    <property type="component" value="Chromosome"/>
</dbReference>
<dbReference type="GO" id="GO:0033982">
    <property type="term" value="F:3-dehydro-L-gulonate-6-phosphate decarboxylase activity"/>
    <property type="evidence" value="ECO:0007669"/>
    <property type="project" value="UniProtKB-EC"/>
</dbReference>
<dbReference type="GO" id="GO:0000287">
    <property type="term" value="F:magnesium ion binding"/>
    <property type="evidence" value="ECO:0007669"/>
    <property type="project" value="UniProtKB-UniRule"/>
</dbReference>
<dbReference type="GO" id="GO:0004590">
    <property type="term" value="F:orotidine-5'-phosphate decarboxylase activity"/>
    <property type="evidence" value="ECO:0007669"/>
    <property type="project" value="InterPro"/>
</dbReference>
<dbReference type="GO" id="GO:0006207">
    <property type="term" value="P:'de novo' pyrimidine nucleobase biosynthetic process"/>
    <property type="evidence" value="ECO:0007669"/>
    <property type="project" value="InterPro"/>
</dbReference>
<dbReference type="GO" id="GO:0019854">
    <property type="term" value="P:L-ascorbic acid catabolic process"/>
    <property type="evidence" value="ECO:0007669"/>
    <property type="project" value="UniProtKB-UniRule"/>
</dbReference>
<dbReference type="CDD" id="cd04726">
    <property type="entry name" value="KGPDC_HPS"/>
    <property type="match status" value="1"/>
</dbReference>
<dbReference type="FunFam" id="3.20.20.70:FF:000022">
    <property type="entry name" value="3-keto-L-gulonate-6-phosphate decarboxylase UlaD"/>
    <property type="match status" value="1"/>
</dbReference>
<dbReference type="Gene3D" id="3.20.20.70">
    <property type="entry name" value="Aldolase class I"/>
    <property type="match status" value="1"/>
</dbReference>
<dbReference type="HAMAP" id="MF_01267">
    <property type="entry name" value="UlaD"/>
    <property type="match status" value="1"/>
</dbReference>
<dbReference type="InterPro" id="IPR023942">
    <property type="entry name" value="3-keto-L-gulonate6Pdecase_UlaD"/>
</dbReference>
<dbReference type="InterPro" id="IPR013785">
    <property type="entry name" value="Aldolase_TIM"/>
</dbReference>
<dbReference type="InterPro" id="IPR041710">
    <property type="entry name" value="HPS/KGPDC"/>
</dbReference>
<dbReference type="InterPro" id="IPR001754">
    <property type="entry name" value="OMPdeCOase_dom"/>
</dbReference>
<dbReference type="InterPro" id="IPR011060">
    <property type="entry name" value="RibuloseP-bd_barrel"/>
</dbReference>
<dbReference type="NCBIfam" id="NF009832">
    <property type="entry name" value="PRK13306.1"/>
    <property type="match status" value="1"/>
</dbReference>
<dbReference type="PANTHER" id="PTHR35039">
    <property type="entry name" value="3-KETO-L-GULONATE-6-PHOSPHATE DECARBOXYLASE SGBH-RELATED"/>
    <property type="match status" value="1"/>
</dbReference>
<dbReference type="PANTHER" id="PTHR35039:SF3">
    <property type="entry name" value="3-KETO-L-GULONATE-6-PHOSPHATE DECARBOXYLASE SGBH-RELATED"/>
    <property type="match status" value="1"/>
</dbReference>
<dbReference type="Pfam" id="PF00215">
    <property type="entry name" value="OMPdecase"/>
    <property type="match status" value="1"/>
</dbReference>
<dbReference type="SMART" id="SM00934">
    <property type="entry name" value="OMPdecase"/>
    <property type="match status" value="1"/>
</dbReference>
<dbReference type="SUPFAM" id="SSF51366">
    <property type="entry name" value="Ribulose-phoshate binding barrel"/>
    <property type="match status" value="1"/>
</dbReference>
<evidence type="ECO:0000255" key="1">
    <source>
        <dbReference type="HAMAP-Rule" id="MF_01267"/>
    </source>
</evidence>
<name>ULAD_ECO81</name>
<reference key="1">
    <citation type="journal article" date="2009" name="PLoS Genet.">
        <title>Organised genome dynamics in the Escherichia coli species results in highly diverse adaptive paths.</title>
        <authorList>
            <person name="Touchon M."/>
            <person name="Hoede C."/>
            <person name="Tenaillon O."/>
            <person name="Barbe V."/>
            <person name="Baeriswyl S."/>
            <person name="Bidet P."/>
            <person name="Bingen E."/>
            <person name="Bonacorsi S."/>
            <person name="Bouchier C."/>
            <person name="Bouvet O."/>
            <person name="Calteau A."/>
            <person name="Chiapello H."/>
            <person name="Clermont O."/>
            <person name="Cruveiller S."/>
            <person name="Danchin A."/>
            <person name="Diard M."/>
            <person name="Dossat C."/>
            <person name="Karoui M.E."/>
            <person name="Frapy E."/>
            <person name="Garry L."/>
            <person name="Ghigo J.M."/>
            <person name="Gilles A.M."/>
            <person name="Johnson J."/>
            <person name="Le Bouguenec C."/>
            <person name="Lescat M."/>
            <person name="Mangenot S."/>
            <person name="Martinez-Jehanne V."/>
            <person name="Matic I."/>
            <person name="Nassif X."/>
            <person name="Oztas S."/>
            <person name="Petit M.A."/>
            <person name="Pichon C."/>
            <person name="Rouy Z."/>
            <person name="Ruf C.S."/>
            <person name="Schneider D."/>
            <person name="Tourret J."/>
            <person name="Vacherie B."/>
            <person name="Vallenet D."/>
            <person name="Medigue C."/>
            <person name="Rocha E.P.C."/>
            <person name="Denamur E."/>
        </authorList>
    </citation>
    <scope>NUCLEOTIDE SEQUENCE [LARGE SCALE GENOMIC DNA]</scope>
    <source>
        <strain>ED1a</strain>
    </source>
</reference>
<organism>
    <name type="scientific">Escherichia coli O81 (strain ED1a)</name>
    <dbReference type="NCBI Taxonomy" id="585397"/>
    <lineage>
        <taxon>Bacteria</taxon>
        <taxon>Pseudomonadati</taxon>
        <taxon>Pseudomonadota</taxon>
        <taxon>Gammaproteobacteria</taxon>
        <taxon>Enterobacterales</taxon>
        <taxon>Enterobacteriaceae</taxon>
        <taxon>Escherichia</taxon>
    </lineage>
</organism>
<proteinExistence type="inferred from homology"/>
<protein>
    <recommendedName>
        <fullName evidence="1">3-keto-L-gulonate-6-phosphate decarboxylase UlaD</fullName>
        <ecNumber evidence="1">4.1.1.85</ecNumber>
    </recommendedName>
    <alternativeName>
        <fullName evidence="1">3-dehydro-L-gulonate-6-phosphate decarboxylase</fullName>
    </alternativeName>
    <alternativeName>
        <fullName evidence="1">KGPDC</fullName>
    </alternativeName>
    <alternativeName>
        <fullName evidence="1">L-ascorbate utilization protein D</fullName>
    </alternativeName>
</protein>
<accession>B7MT10</accession>
<keyword id="KW-0119">Carbohydrate metabolism</keyword>
<keyword id="KW-0210">Decarboxylase</keyword>
<keyword id="KW-0456">Lyase</keyword>
<keyword id="KW-0460">Magnesium</keyword>
<keyword id="KW-0479">Metal-binding</keyword>
<comment type="function">
    <text evidence="1">Catalyzes the decarboxylation of 3-keto-L-gulonate-6-P into L-xylulose-5-P. Is involved in the anaerobic L-ascorbate utilization.</text>
</comment>
<comment type="catalytic activity">
    <reaction evidence="1">
        <text>3-dehydro-L-gulonate 6-phosphate + H(+) = L-xylulose 5-phosphate + CO2</text>
        <dbReference type="Rhea" id="RHEA:14353"/>
        <dbReference type="ChEBI" id="CHEBI:15378"/>
        <dbReference type="ChEBI" id="CHEBI:16526"/>
        <dbReference type="ChEBI" id="CHEBI:57829"/>
        <dbReference type="ChEBI" id="CHEBI:58774"/>
        <dbReference type="EC" id="4.1.1.85"/>
    </reaction>
</comment>
<comment type="cofactor">
    <cofactor evidence="1">
        <name>Mg(2+)</name>
        <dbReference type="ChEBI" id="CHEBI:18420"/>
    </cofactor>
    <text evidence="1">Binds 1 Mg(2+) ion per subunit.</text>
</comment>
<comment type="pathway">
    <text evidence="1">Cofactor degradation; L-ascorbate degradation; D-xylulose 5-phosphate from L-ascorbate: step 2/4.</text>
</comment>
<comment type="subunit">
    <text evidence="1">Homodimer.</text>
</comment>
<comment type="induction">
    <text evidence="1">Induced by L-ascorbate. Repressed by UlaR.</text>
</comment>
<comment type="similarity">
    <text evidence="1">Belongs to the HPS/KGPDC family. KGPDC subfamily.</text>
</comment>
<feature type="chain" id="PRO_1000165142" description="3-keto-L-gulonate-6-phosphate decarboxylase UlaD">
    <location>
        <begin position="1"/>
        <end position="216"/>
    </location>
</feature>
<feature type="binding site" evidence="1">
    <location>
        <position position="11"/>
    </location>
    <ligand>
        <name>substrate</name>
    </ligand>
</feature>
<feature type="binding site" evidence="1">
    <location>
        <position position="33"/>
    </location>
    <ligand>
        <name>Mg(2+)</name>
        <dbReference type="ChEBI" id="CHEBI:18420"/>
    </ligand>
</feature>
<feature type="binding site" evidence="1">
    <location>
        <position position="62"/>
    </location>
    <ligand>
        <name>Mg(2+)</name>
        <dbReference type="ChEBI" id="CHEBI:18420"/>
    </ligand>
</feature>
<feature type="binding site" evidence="1">
    <location>
        <position position="192"/>
    </location>
    <ligand>
        <name>substrate</name>
    </ligand>
</feature>
<feature type="site" description="Transition state stabilizer" evidence="1">
    <location>
        <position position="64"/>
    </location>
</feature>
<feature type="site" description="Transition state stabilizer" evidence="1">
    <location>
        <position position="67"/>
    </location>
</feature>
<gene>
    <name evidence="1" type="primary">ulaD</name>
    <name type="ordered locus">ECED1_4983</name>
</gene>
<sequence>MSLPMLQVALDNQTMDSAYETTRLIAEEVDIIEVGTILCVGEGVRAVRDLKALYPHKIVLADAKIADAGKILSRMCFEANADWVTVICCADINTAKGALDVAKEFNGDVQIELTGYWTWEQAQQWRDAGIGQVVYHRSRDAQAAGVAWGEADITAIKRLSDMGFKVTVTGGLALEDLPLFKGIPIHVFIAGRSIRDAASPVEAARQFKRSIAELWG</sequence>